<reference key="1">
    <citation type="journal article" date="2003" name="Appl. Microbiol. Biotechnol.">
        <title>The Corynebacterium glutamicum genome: features and impacts on biotechnological processes.</title>
        <authorList>
            <person name="Ikeda M."/>
            <person name="Nakagawa S."/>
        </authorList>
    </citation>
    <scope>NUCLEOTIDE SEQUENCE [LARGE SCALE GENOMIC DNA]</scope>
    <source>
        <strain>ATCC 13032 / DSM 20300 / JCM 1318 / BCRC 11384 / CCUG 27702 / LMG 3730 / NBRC 12168 / NCIMB 10025 / NRRL B-2784 / 534</strain>
    </source>
</reference>
<reference key="2">
    <citation type="journal article" date="2003" name="J. Biotechnol.">
        <title>The complete Corynebacterium glutamicum ATCC 13032 genome sequence and its impact on the production of L-aspartate-derived amino acids and vitamins.</title>
        <authorList>
            <person name="Kalinowski J."/>
            <person name="Bathe B."/>
            <person name="Bartels D."/>
            <person name="Bischoff N."/>
            <person name="Bott M."/>
            <person name="Burkovski A."/>
            <person name="Dusch N."/>
            <person name="Eggeling L."/>
            <person name="Eikmanns B.J."/>
            <person name="Gaigalat L."/>
            <person name="Goesmann A."/>
            <person name="Hartmann M."/>
            <person name="Huthmacher K."/>
            <person name="Kraemer R."/>
            <person name="Linke B."/>
            <person name="McHardy A.C."/>
            <person name="Meyer F."/>
            <person name="Moeckel B."/>
            <person name="Pfefferle W."/>
            <person name="Puehler A."/>
            <person name="Rey D.A."/>
            <person name="Rueckert C."/>
            <person name="Rupp O."/>
            <person name="Sahm H."/>
            <person name="Wendisch V.F."/>
            <person name="Wiegraebe I."/>
            <person name="Tauch A."/>
        </authorList>
    </citation>
    <scope>NUCLEOTIDE SEQUENCE [LARGE SCALE GENOMIC DNA]</scope>
    <source>
        <strain>ATCC 13032 / DSM 20300 / JCM 1318 / BCRC 11384 / CCUG 27702 / LMG 3730 / NBRC 12168 / NCIMB 10025 / NRRL B-2784 / 534</strain>
    </source>
</reference>
<keyword id="KW-0963">Cytoplasm</keyword>
<keyword id="KW-0255">Endonuclease</keyword>
<keyword id="KW-0378">Hydrolase</keyword>
<keyword id="KW-0464">Manganese</keyword>
<keyword id="KW-0479">Metal-binding</keyword>
<keyword id="KW-0540">Nuclease</keyword>
<keyword id="KW-1185">Reference proteome</keyword>
<dbReference type="EC" id="3.1.26.4" evidence="1"/>
<dbReference type="EMBL" id="BA000036">
    <property type="protein sequence ID" value="BAB99426.1"/>
    <property type="molecule type" value="Genomic_DNA"/>
</dbReference>
<dbReference type="EMBL" id="BX927154">
    <property type="protein sequence ID" value="CAF20373.1"/>
    <property type="status" value="ALT_INIT"/>
    <property type="molecule type" value="Genomic_DNA"/>
</dbReference>
<dbReference type="RefSeq" id="NP_601238.1">
    <property type="nucleotide sequence ID" value="NC_003450.3"/>
</dbReference>
<dbReference type="SMR" id="Q8NNZ4"/>
<dbReference type="STRING" id="196627.cg2230"/>
<dbReference type="KEGG" id="cgb:cg2230"/>
<dbReference type="KEGG" id="cgl:Cgl2033"/>
<dbReference type="PATRIC" id="fig|196627.13.peg.1971"/>
<dbReference type="eggNOG" id="COG0164">
    <property type="taxonomic scope" value="Bacteria"/>
</dbReference>
<dbReference type="HOGENOM" id="CLU_036532_1_0_11"/>
<dbReference type="OrthoDB" id="9803420at2"/>
<dbReference type="BioCyc" id="CORYNE:G18NG-11625-MONOMER"/>
<dbReference type="Proteomes" id="UP000000582">
    <property type="component" value="Chromosome"/>
</dbReference>
<dbReference type="Proteomes" id="UP000001009">
    <property type="component" value="Chromosome"/>
</dbReference>
<dbReference type="GO" id="GO:0005737">
    <property type="term" value="C:cytoplasm"/>
    <property type="evidence" value="ECO:0007669"/>
    <property type="project" value="UniProtKB-SubCell"/>
</dbReference>
<dbReference type="GO" id="GO:0032299">
    <property type="term" value="C:ribonuclease H2 complex"/>
    <property type="evidence" value="ECO:0007669"/>
    <property type="project" value="TreeGrafter"/>
</dbReference>
<dbReference type="GO" id="GO:0030145">
    <property type="term" value="F:manganese ion binding"/>
    <property type="evidence" value="ECO:0007669"/>
    <property type="project" value="UniProtKB-UniRule"/>
</dbReference>
<dbReference type="GO" id="GO:0003723">
    <property type="term" value="F:RNA binding"/>
    <property type="evidence" value="ECO:0007669"/>
    <property type="project" value="InterPro"/>
</dbReference>
<dbReference type="GO" id="GO:0004523">
    <property type="term" value="F:RNA-DNA hybrid ribonuclease activity"/>
    <property type="evidence" value="ECO:0007669"/>
    <property type="project" value="UniProtKB-UniRule"/>
</dbReference>
<dbReference type="GO" id="GO:0043137">
    <property type="term" value="P:DNA replication, removal of RNA primer"/>
    <property type="evidence" value="ECO:0007669"/>
    <property type="project" value="TreeGrafter"/>
</dbReference>
<dbReference type="GO" id="GO:0006298">
    <property type="term" value="P:mismatch repair"/>
    <property type="evidence" value="ECO:0007669"/>
    <property type="project" value="TreeGrafter"/>
</dbReference>
<dbReference type="CDD" id="cd07182">
    <property type="entry name" value="RNase_HII_bacteria_HII_like"/>
    <property type="match status" value="1"/>
</dbReference>
<dbReference type="Gene3D" id="3.30.420.10">
    <property type="entry name" value="Ribonuclease H-like superfamily/Ribonuclease H"/>
    <property type="match status" value="1"/>
</dbReference>
<dbReference type="HAMAP" id="MF_00052_B">
    <property type="entry name" value="RNase_HII_B"/>
    <property type="match status" value="1"/>
</dbReference>
<dbReference type="InterPro" id="IPR022898">
    <property type="entry name" value="RNase_HII"/>
</dbReference>
<dbReference type="InterPro" id="IPR001352">
    <property type="entry name" value="RNase_HII/HIII"/>
</dbReference>
<dbReference type="InterPro" id="IPR024567">
    <property type="entry name" value="RNase_HII/HIII_dom"/>
</dbReference>
<dbReference type="InterPro" id="IPR012337">
    <property type="entry name" value="RNaseH-like_sf"/>
</dbReference>
<dbReference type="InterPro" id="IPR036397">
    <property type="entry name" value="RNaseH_sf"/>
</dbReference>
<dbReference type="NCBIfam" id="NF000595">
    <property type="entry name" value="PRK00015.1-3"/>
    <property type="match status" value="1"/>
</dbReference>
<dbReference type="NCBIfam" id="NF000598">
    <property type="entry name" value="PRK00015.2-2"/>
    <property type="match status" value="1"/>
</dbReference>
<dbReference type="PANTHER" id="PTHR10954">
    <property type="entry name" value="RIBONUCLEASE H2 SUBUNIT A"/>
    <property type="match status" value="1"/>
</dbReference>
<dbReference type="PANTHER" id="PTHR10954:SF18">
    <property type="entry name" value="RIBONUCLEASE HII"/>
    <property type="match status" value="1"/>
</dbReference>
<dbReference type="Pfam" id="PF01351">
    <property type="entry name" value="RNase_HII"/>
    <property type="match status" value="1"/>
</dbReference>
<dbReference type="SUPFAM" id="SSF53098">
    <property type="entry name" value="Ribonuclease H-like"/>
    <property type="match status" value="1"/>
</dbReference>
<dbReference type="PROSITE" id="PS51975">
    <property type="entry name" value="RNASE_H_2"/>
    <property type="match status" value="1"/>
</dbReference>
<proteinExistence type="inferred from homology"/>
<evidence type="ECO:0000255" key="1">
    <source>
        <dbReference type="HAMAP-Rule" id="MF_00052"/>
    </source>
</evidence>
<evidence type="ECO:0000255" key="2">
    <source>
        <dbReference type="PROSITE-ProRule" id="PRU01319"/>
    </source>
</evidence>
<evidence type="ECO:0000305" key="3"/>
<gene>
    <name evidence="1" type="primary">rnhB</name>
    <name type="ordered locus">Cgl2033</name>
    <name type="ordered locus">cg2230</name>
</gene>
<feature type="chain" id="PRO_0000111569" description="Ribonuclease HII">
    <location>
        <begin position="1"/>
        <end position="209"/>
    </location>
</feature>
<feature type="domain" description="RNase H type-2" evidence="2">
    <location>
        <begin position="7"/>
        <end position="198"/>
    </location>
</feature>
<feature type="binding site" evidence="1">
    <location>
        <position position="13"/>
    </location>
    <ligand>
        <name>a divalent metal cation</name>
        <dbReference type="ChEBI" id="CHEBI:60240"/>
    </ligand>
</feature>
<feature type="binding site" evidence="1">
    <location>
        <position position="14"/>
    </location>
    <ligand>
        <name>a divalent metal cation</name>
        <dbReference type="ChEBI" id="CHEBI:60240"/>
    </ligand>
</feature>
<feature type="binding site" evidence="1">
    <location>
        <position position="107"/>
    </location>
    <ligand>
        <name>a divalent metal cation</name>
        <dbReference type="ChEBI" id="CHEBI:60240"/>
    </ligand>
</feature>
<name>RNH2_CORGL</name>
<accession>Q8NNZ4</accession>
<protein>
    <recommendedName>
        <fullName evidence="1">Ribonuclease HII</fullName>
        <shortName evidence="1">RNase HII</shortName>
        <ecNumber evidence="1">3.1.26.4</ecNumber>
    </recommendedName>
</protein>
<sequence>MSRNGLGPVAGVDEAGRGACCGPISIAACILPDKPIQELAALTDSKKLSASTREKLMPLIKKHALAWSVIVISAQDIDRFGIQHANISGMRRAVAALGTQPGYVLTDAMKVPGFTVPYLPIIGGDASARCIAAASVLAKQTRDDIMTDMANDYPHYGLEIHKGYSTKIHMDAVRHHGASPEHRYSYANVAKAHQEWLHAADNDTTEGGA</sequence>
<comment type="function">
    <text evidence="1">Endonuclease that specifically degrades the RNA of RNA-DNA hybrids.</text>
</comment>
<comment type="catalytic activity">
    <reaction evidence="1">
        <text>Endonucleolytic cleavage to 5'-phosphomonoester.</text>
        <dbReference type="EC" id="3.1.26.4"/>
    </reaction>
</comment>
<comment type="cofactor">
    <cofactor evidence="1">
        <name>Mn(2+)</name>
        <dbReference type="ChEBI" id="CHEBI:29035"/>
    </cofactor>
    <cofactor evidence="1">
        <name>Mg(2+)</name>
        <dbReference type="ChEBI" id="CHEBI:18420"/>
    </cofactor>
    <text evidence="1">Manganese or magnesium. Binds 1 divalent metal ion per monomer in the absence of substrate. May bind a second metal ion after substrate binding.</text>
</comment>
<comment type="subcellular location">
    <subcellularLocation>
        <location evidence="1">Cytoplasm</location>
    </subcellularLocation>
</comment>
<comment type="similarity">
    <text evidence="1">Belongs to the RNase HII family.</text>
</comment>
<comment type="sequence caution" evidence="3">
    <conflict type="erroneous initiation">
        <sequence resource="EMBL-CDS" id="CAF20373"/>
    </conflict>
</comment>
<organism>
    <name type="scientific">Corynebacterium glutamicum (strain ATCC 13032 / DSM 20300 / JCM 1318 / BCRC 11384 / CCUG 27702 / LMG 3730 / NBRC 12168 / NCIMB 10025 / NRRL B-2784 / 534)</name>
    <dbReference type="NCBI Taxonomy" id="196627"/>
    <lineage>
        <taxon>Bacteria</taxon>
        <taxon>Bacillati</taxon>
        <taxon>Actinomycetota</taxon>
        <taxon>Actinomycetes</taxon>
        <taxon>Mycobacteriales</taxon>
        <taxon>Corynebacteriaceae</taxon>
        <taxon>Corynebacterium</taxon>
    </lineage>
</organism>